<protein>
    <recommendedName>
        <fullName evidence="1">Large ribosomal subunit protein eL39</fullName>
    </recommendedName>
    <alternativeName>
        <fullName evidence="2">50S ribosomal protein L39e</fullName>
    </alternativeName>
</protein>
<reference key="1">
    <citation type="journal article" date="2007" name="Genome Biol.">
        <title>Genome analysis and genome-wide proteomics of Thermococcus gammatolerans, the most radioresistant organism known amongst the Archaea.</title>
        <authorList>
            <person name="Zivanovic Y."/>
            <person name="Armengaud J."/>
            <person name="Lagorce A."/>
            <person name="Leplat C."/>
            <person name="Guerin P."/>
            <person name="Dutertre M."/>
            <person name="Anthouard V."/>
            <person name="Forterre P."/>
            <person name="Wincker P."/>
            <person name="Confalonieri F."/>
        </authorList>
    </citation>
    <scope>NUCLEOTIDE SEQUENCE [LARGE SCALE GENOMIC DNA]</scope>
    <source>
        <strain>DSM 15229 / JCM 11827 / EJ3</strain>
    </source>
</reference>
<proteinExistence type="inferred from homology"/>
<gene>
    <name evidence="1" type="primary">rpl39e</name>
    <name type="ordered locus">TGAM_1684</name>
</gene>
<keyword id="KW-1185">Reference proteome</keyword>
<keyword id="KW-0687">Ribonucleoprotein</keyword>
<keyword id="KW-0689">Ribosomal protein</keyword>
<feature type="chain" id="PRO_1000212327" description="Large ribosomal subunit protein eL39">
    <location>
        <begin position="1"/>
        <end position="51"/>
    </location>
</feature>
<sequence>MARNKPLAKKLRLAKAAKQNRRVPVWVIVKTNRKVMTHPKRRHWRRTKLKE</sequence>
<name>RL39_THEGJ</name>
<accession>C5A7H4</accession>
<dbReference type="EMBL" id="CP001398">
    <property type="protein sequence ID" value="ACS34186.1"/>
    <property type="molecule type" value="Genomic_DNA"/>
</dbReference>
<dbReference type="RefSeq" id="WP_010477181.1">
    <property type="nucleotide sequence ID" value="NC_012804.1"/>
</dbReference>
<dbReference type="SMR" id="C5A7H4"/>
<dbReference type="STRING" id="593117.TGAM_1684"/>
<dbReference type="PaxDb" id="593117-TGAM_1684"/>
<dbReference type="GeneID" id="7987594"/>
<dbReference type="KEGG" id="tga:TGAM_1684"/>
<dbReference type="PATRIC" id="fig|593117.10.peg.1690"/>
<dbReference type="eggNOG" id="arCOG04177">
    <property type="taxonomic scope" value="Archaea"/>
</dbReference>
<dbReference type="HOGENOM" id="CLU_181948_4_0_2"/>
<dbReference type="Proteomes" id="UP000001488">
    <property type="component" value="Chromosome"/>
</dbReference>
<dbReference type="GO" id="GO:0022625">
    <property type="term" value="C:cytosolic large ribosomal subunit"/>
    <property type="evidence" value="ECO:0007669"/>
    <property type="project" value="TreeGrafter"/>
</dbReference>
<dbReference type="GO" id="GO:0003735">
    <property type="term" value="F:structural constituent of ribosome"/>
    <property type="evidence" value="ECO:0007669"/>
    <property type="project" value="InterPro"/>
</dbReference>
<dbReference type="GO" id="GO:0006412">
    <property type="term" value="P:translation"/>
    <property type="evidence" value="ECO:0007669"/>
    <property type="project" value="UniProtKB-UniRule"/>
</dbReference>
<dbReference type="FunFam" id="1.10.1620.10:FF:000001">
    <property type="entry name" value="60S ribosomal protein-like L39"/>
    <property type="match status" value="1"/>
</dbReference>
<dbReference type="Gene3D" id="1.10.1620.10">
    <property type="entry name" value="Ribosomal protein L39e"/>
    <property type="match status" value="1"/>
</dbReference>
<dbReference type="HAMAP" id="MF_00629">
    <property type="entry name" value="Ribosomal_eL39"/>
    <property type="match status" value="1"/>
</dbReference>
<dbReference type="InterPro" id="IPR000077">
    <property type="entry name" value="Ribosomal_eL39"/>
</dbReference>
<dbReference type="InterPro" id="IPR020083">
    <property type="entry name" value="Ribosomal_eL39_CS"/>
</dbReference>
<dbReference type="InterPro" id="IPR023626">
    <property type="entry name" value="Ribosomal_eL39_dom_sf"/>
</dbReference>
<dbReference type="NCBIfam" id="NF002316">
    <property type="entry name" value="PRK01242.1"/>
    <property type="match status" value="1"/>
</dbReference>
<dbReference type="PANTHER" id="PTHR19970:SF0">
    <property type="entry name" value="LARGE RIBOSOMAL SUBUNIT PROTEIN EL39"/>
    <property type="match status" value="1"/>
</dbReference>
<dbReference type="PANTHER" id="PTHR19970">
    <property type="entry name" value="RIBOSOMAL PROTEIN L39E"/>
    <property type="match status" value="1"/>
</dbReference>
<dbReference type="Pfam" id="PF00832">
    <property type="entry name" value="Ribosomal_L39"/>
    <property type="match status" value="1"/>
</dbReference>
<dbReference type="SUPFAM" id="SSF48662">
    <property type="entry name" value="Ribosomal protein L39e"/>
    <property type="match status" value="1"/>
</dbReference>
<dbReference type="PROSITE" id="PS00051">
    <property type="entry name" value="RIBOSOMAL_L39E"/>
    <property type="match status" value="1"/>
</dbReference>
<organism>
    <name type="scientific">Thermococcus gammatolerans (strain DSM 15229 / JCM 11827 / EJ3)</name>
    <dbReference type="NCBI Taxonomy" id="593117"/>
    <lineage>
        <taxon>Archaea</taxon>
        <taxon>Methanobacteriati</taxon>
        <taxon>Methanobacteriota</taxon>
        <taxon>Thermococci</taxon>
        <taxon>Thermococcales</taxon>
        <taxon>Thermococcaceae</taxon>
        <taxon>Thermococcus</taxon>
    </lineage>
</organism>
<evidence type="ECO:0000255" key="1">
    <source>
        <dbReference type="HAMAP-Rule" id="MF_00629"/>
    </source>
</evidence>
<evidence type="ECO:0000305" key="2"/>
<comment type="similarity">
    <text evidence="1">Belongs to the eukaryotic ribosomal protein eL39 family.</text>
</comment>